<organism>
    <name type="scientific">Hordeum vulgare</name>
    <name type="common">Barley</name>
    <dbReference type="NCBI Taxonomy" id="4513"/>
    <lineage>
        <taxon>Eukaryota</taxon>
        <taxon>Viridiplantae</taxon>
        <taxon>Streptophyta</taxon>
        <taxon>Embryophyta</taxon>
        <taxon>Tracheophyta</taxon>
        <taxon>Spermatophyta</taxon>
        <taxon>Magnoliopsida</taxon>
        <taxon>Liliopsida</taxon>
        <taxon>Poales</taxon>
        <taxon>Poaceae</taxon>
        <taxon>BOP clade</taxon>
        <taxon>Pooideae</taxon>
        <taxon>Triticodae</taxon>
        <taxon>Triticeae</taxon>
        <taxon>Hordeinae</taxon>
        <taxon>Hordeum</taxon>
    </lineage>
</organism>
<comment type="function">
    <text evidence="1">One of the components of the core complex of photosystem II (PSII). PSII is a light-driven water:plastoquinone oxidoreductase that uses light energy to abstract electrons from H(2)O, generating O(2) and a proton gradient subsequently used for ATP formation. It consists of a core antenna complex that captures photons, and an electron transfer chain that converts photonic excitation into a charge separation.</text>
</comment>
<comment type="subunit">
    <text evidence="1 2">PSII is composed of 1 copy each of membrane proteins PsbA, PsbB, PsbC, PsbD, PsbE, PsbF, PsbH, PsbI, PsbJ, PsbK, PsbL, PsbM, PsbT, PsbX, PsbY, PsbZ, Psb30/Ycf12, at least 3 peripheral proteins of the oxygen-evolving complex and a large number of cofactors. It forms dimeric complexes (By similarity). Detected in both etioplasts and green leaves; PSII is only assembled in green leaves (PubMed:19137553).</text>
</comment>
<comment type="subcellular location">
    <subcellularLocation>
        <location evidence="1 3">Plastid</location>
        <location evidence="1 3">Chloroplast thylakoid membrane</location>
        <topology evidence="1 3">Single-pass membrane protein</topology>
    </subcellularLocation>
</comment>
<comment type="similarity">
    <text evidence="1">Belongs to the PsbJ family.</text>
</comment>
<evidence type="ECO:0000255" key="1">
    <source>
        <dbReference type="HAMAP-Rule" id="MF_01305"/>
    </source>
</evidence>
<evidence type="ECO:0000269" key="2">
    <source>
    </source>
</evidence>
<evidence type="ECO:0000305" key="3">
    <source>
    </source>
</evidence>
<dbReference type="EMBL" id="X14108">
    <property type="status" value="NOT_ANNOTATED_CDS"/>
    <property type="molecule type" value="Genomic_DNA"/>
</dbReference>
<dbReference type="EMBL" id="AY309024">
    <property type="protein sequence ID" value="AAP70320.1"/>
    <property type="molecule type" value="Genomic_DNA"/>
</dbReference>
<dbReference type="EMBL" id="EF115541">
    <property type="protein sequence ID" value="ABK79426.1"/>
    <property type="molecule type" value="Genomic_DNA"/>
</dbReference>
<dbReference type="PIR" id="S04065">
    <property type="entry name" value="S04065"/>
</dbReference>
<dbReference type="RefSeq" id="YP_874666.1">
    <property type="nucleotide sequence ID" value="NC_008590.1"/>
</dbReference>
<dbReference type="SMR" id="P20175"/>
<dbReference type="GeneID" id="4525052"/>
<dbReference type="GO" id="GO:0009535">
    <property type="term" value="C:chloroplast thylakoid membrane"/>
    <property type="evidence" value="ECO:0007669"/>
    <property type="project" value="UniProtKB-SubCell"/>
</dbReference>
<dbReference type="GO" id="GO:0009539">
    <property type="term" value="C:photosystem II reaction center"/>
    <property type="evidence" value="ECO:0007669"/>
    <property type="project" value="InterPro"/>
</dbReference>
<dbReference type="GO" id="GO:0015979">
    <property type="term" value="P:photosynthesis"/>
    <property type="evidence" value="ECO:0007669"/>
    <property type="project" value="UniProtKB-UniRule"/>
</dbReference>
<dbReference type="Gene3D" id="6.10.250.2070">
    <property type="match status" value="1"/>
</dbReference>
<dbReference type="HAMAP" id="MF_01305">
    <property type="entry name" value="PSII_PsbJ"/>
    <property type="match status" value="1"/>
</dbReference>
<dbReference type="InterPro" id="IPR002682">
    <property type="entry name" value="PSII_PsbJ"/>
</dbReference>
<dbReference type="InterPro" id="IPR037267">
    <property type="entry name" value="PSII_PsbJ_sf"/>
</dbReference>
<dbReference type="NCBIfam" id="NF002722">
    <property type="entry name" value="PRK02565.1"/>
    <property type="match status" value="1"/>
</dbReference>
<dbReference type="PANTHER" id="PTHR34812">
    <property type="entry name" value="PHOTOSYSTEM II REACTION CENTER PROTEIN J"/>
    <property type="match status" value="1"/>
</dbReference>
<dbReference type="PANTHER" id="PTHR34812:SF3">
    <property type="entry name" value="PHOTOSYSTEM II REACTION CENTER PROTEIN J"/>
    <property type="match status" value="1"/>
</dbReference>
<dbReference type="Pfam" id="PF01788">
    <property type="entry name" value="PsbJ"/>
    <property type="match status" value="1"/>
</dbReference>
<dbReference type="SUPFAM" id="SSF161021">
    <property type="entry name" value="Photosystem II reaction center protein J, PsbJ"/>
    <property type="match status" value="1"/>
</dbReference>
<keyword id="KW-0150">Chloroplast</keyword>
<keyword id="KW-0472">Membrane</keyword>
<keyword id="KW-0602">Photosynthesis</keyword>
<keyword id="KW-0604">Photosystem II</keyword>
<keyword id="KW-0934">Plastid</keyword>
<keyword id="KW-0674">Reaction center</keyword>
<keyword id="KW-0793">Thylakoid</keyword>
<keyword id="KW-0812">Transmembrane</keyword>
<keyword id="KW-1133">Transmembrane helix</keyword>
<proteinExistence type="evidence at protein level"/>
<geneLocation type="chloroplast"/>
<feature type="chain" id="PRO_0000216595" description="Photosystem II reaction center protein J">
    <location>
        <begin position="1"/>
        <end position="40"/>
    </location>
</feature>
<feature type="transmembrane region" description="Helical" evidence="1">
    <location>
        <begin position="8"/>
        <end position="28"/>
    </location>
</feature>
<reference key="1">
    <citation type="journal article" date="1989" name="Nucleic Acids Res.">
        <title>Nucleotide sequence of the barley chloroplast psbE, psbF genes and flanking regions.</title>
        <authorList>
            <person name="Chakhmakhcheva O.G."/>
            <person name="Andreeva A.V."/>
            <person name="Buryakova A.A."/>
            <person name="Reverdatto S.V."/>
            <person name="Efimov V.A."/>
        </authorList>
    </citation>
    <scope>NUCLEOTIDE SEQUENCE [GENOMIC DNA]</scope>
    <source>
        <strain>cv. Sabarlis</strain>
    </source>
</reference>
<reference key="2">
    <citation type="journal article" date="1991" name="Bioorg. Khim.">
        <title>Photosystem II of rye. Nucleotide sequence of the psbB, psbC, psbE, psbF, psbH genes of rye and chloroplast DNA regions adjacent to them.</title>
        <authorList>
            <person name="Efimov V.A."/>
            <person name="Andreeva A.V."/>
            <person name="Reverdatto S.V."/>
            <person name="Chakhmakhcheva O.G."/>
        </authorList>
    </citation>
    <scope>NUCLEOTIDE SEQUENCE [GENOMIC DNA]</scope>
    <source>
        <strain>cv. Sabarlis</strain>
    </source>
</reference>
<reference key="3">
    <citation type="submission" date="2003-05" db="EMBL/GenBank/DDBJ databases">
        <title>Chloroplast psbL and psbJ genes of Chinese Hordeum species.</title>
        <authorList>
            <person name="Wei Y.-M."/>
            <person name="Yan Z.-H."/>
            <person name="Wu W."/>
            <person name="Zhang Z.-Q."/>
            <person name="Zheng Y.-L."/>
        </authorList>
    </citation>
    <scope>NUCLEOTIDE SEQUENCE [GENOMIC DNA]</scope>
</reference>
<reference key="4">
    <citation type="journal article" date="2007" name="Theor. Appl. Genet.">
        <title>Complete chloroplast genome sequences of Hordeum vulgare, Sorghum bicolor and Agrostis stolonifera, and comparative analyses with other grass genomes.</title>
        <authorList>
            <person name="Saski C."/>
            <person name="Lee S.-B."/>
            <person name="Fjellheim S."/>
            <person name="Guda C."/>
            <person name="Jansen R.K."/>
            <person name="Luo H."/>
            <person name="Tomkins J."/>
            <person name="Rognli O.A."/>
            <person name="Daniell H."/>
            <person name="Clarke J.L."/>
        </authorList>
    </citation>
    <scope>NUCLEOTIDE SEQUENCE [LARGE SCALE GENOMIC DNA]</scope>
    <source>
        <strain>cv. Morex</strain>
    </source>
</reference>
<reference key="5">
    <citation type="journal article" date="2009" name="Proteomics">
        <title>Mass spectrometric characterization of membrane integral low molecular weight proteins from photosystem II in barley etioplasts.</title>
        <authorList>
            <person name="Ploescher M."/>
            <person name="Granvogl B."/>
            <person name="Zoryan M."/>
            <person name="Reisinger V."/>
            <person name="Eichacker L.A."/>
        </authorList>
    </citation>
    <scope>IDENTIFICATION BY MASS SPECTROMETRY</scope>
    <scope>SUBUNIT</scope>
    <scope>SUBCELLULAR LOCATION</scope>
    <source>
        <strain>cv. Steffi</strain>
    </source>
</reference>
<name>PSBJ_HORVU</name>
<accession>P20175</accession>
<accession>A1E9K4</accession>
<accession>Q6W6R0</accession>
<sequence>MADTTGRIPLWLIGTVAGIPVIGLVGVFFYGSYSGLGSSL</sequence>
<protein>
    <recommendedName>
        <fullName evidence="1">Photosystem II reaction center protein J</fullName>
        <shortName evidence="1">PSII-J</shortName>
    </recommendedName>
</protein>
<gene>
    <name evidence="1" type="primary">psbJ</name>
</gene>